<keyword id="KW-1003">Cell membrane</keyword>
<keyword id="KW-0472">Membrane</keyword>
<keyword id="KW-1185">Reference proteome</keyword>
<keyword id="KW-0812">Transmembrane</keyword>
<keyword id="KW-1133">Transmembrane helix</keyword>
<protein>
    <recommendedName>
        <fullName>Uncharacterized membrane protein YcsG</fullName>
    </recommendedName>
</protein>
<gene>
    <name type="primary">ycsG</name>
    <name type="synonym">ycsH</name>
    <name type="ordered locus">BSU04060</name>
</gene>
<organism>
    <name type="scientific">Bacillus subtilis (strain 168)</name>
    <dbReference type="NCBI Taxonomy" id="224308"/>
    <lineage>
        <taxon>Bacteria</taxon>
        <taxon>Bacillati</taxon>
        <taxon>Bacillota</taxon>
        <taxon>Bacilli</taxon>
        <taxon>Bacillales</taxon>
        <taxon>Bacillaceae</taxon>
        <taxon>Bacillus</taxon>
    </lineage>
</organism>
<accession>P42964</accession>
<accession>P42965</accession>
<accession>P94436</accession>
<sequence>MEQQKKTAGKKAGSWSLLMGAAFLMATSAIGPGFLTQTATFTNTLAASFGFVILISIILDIFAQTNVWRIIAVSGKRGQEIANMVLPGLGYFIAILVVLGGLAFNIGNIGGAGLGLQVLFGITPETGALISAVIAILIFVIKEAGKAMDRFTQIAGFVMIILTVYVAATTAPPVGQAVANTFVPEHISIFAIVTLVGGTVGGYITFAGGHRLLDAGIKGKESIPQVTKSSVVGILITSVMRIALFLAVLGVVSKGLHIDESNPAASVFKLAAGNVGYKIFGLIMWSAAITSVIGAAYTSVSFFKTFSPKIEKNSRGIIIGFIVVSTLAFVTIGQPAKILVLVGSLNGLILPIALGTLLVAAYKKNIVGDYKHPLWLTSTGALVVIVMAVMGIYTLCTQLPQLWS</sequence>
<name>YCSG_BACSU</name>
<reference key="1">
    <citation type="journal article" date="1995" name="Microbiology">
        <title>Determination of a 17,484 bp nucleotide sequence around the 39 degrees region of the Bacillus subtilis chromosome and similarity analysis of the products of putative ORFs.</title>
        <authorList>
            <person name="Akagawa E."/>
            <person name="Kurita K."/>
            <person name="Sugawara T."/>
            <person name="Nakamura K."/>
            <person name="Kasahara Y."/>
            <person name="Ogasawara N."/>
            <person name="Yamane K."/>
        </authorList>
    </citation>
    <scope>NUCLEOTIDE SEQUENCE [GENOMIC DNA]</scope>
    <source>
        <strain>168</strain>
    </source>
</reference>
<reference key="2">
    <citation type="journal article" date="1997" name="Nature">
        <title>The complete genome sequence of the Gram-positive bacterium Bacillus subtilis.</title>
        <authorList>
            <person name="Kunst F."/>
            <person name="Ogasawara N."/>
            <person name="Moszer I."/>
            <person name="Albertini A.M."/>
            <person name="Alloni G."/>
            <person name="Azevedo V."/>
            <person name="Bertero M.G."/>
            <person name="Bessieres P."/>
            <person name="Bolotin A."/>
            <person name="Borchert S."/>
            <person name="Borriss R."/>
            <person name="Boursier L."/>
            <person name="Brans A."/>
            <person name="Braun M."/>
            <person name="Brignell S.C."/>
            <person name="Bron S."/>
            <person name="Brouillet S."/>
            <person name="Bruschi C.V."/>
            <person name="Caldwell B."/>
            <person name="Capuano V."/>
            <person name="Carter N.M."/>
            <person name="Choi S.-K."/>
            <person name="Codani J.-J."/>
            <person name="Connerton I.F."/>
            <person name="Cummings N.J."/>
            <person name="Daniel R.A."/>
            <person name="Denizot F."/>
            <person name="Devine K.M."/>
            <person name="Duesterhoeft A."/>
            <person name="Ehrlich S.D."/>
            <person name="Emmerson P.T."/>
            <person name="Entian K.-D."/>
            <person name="Errington J."/>
            <person name="Fabret C."/>
            <person name="Ferrari E."/>
            <person name="Foulger D."/>
            <person name="Fritz C."/>
            <person name="Fujita M."/>
            <person name="Fujita Y."/>
            <person name="Fuma S."/>
            <person name="Galizzi A."/>
            <person name="Galleron N."/>
            <person name="Ghim S.-Y."/>
            <person name="Glaser P."/>
            <person name="Goffeau A."/>
            <person name="Golightly E.J."/>
            <person name="Grandi G."/>
            <person name="Guiseppi G."/>
            <person name="Guy B.J."/>
            <person name="Haga K."/>
            <person name="Haiech J."/>
            <person name="Harwood C.R."/>
            <person name="Henaut A."/>
            <person name="Hilbert H."/>
            <person name="Holsappel S."/>
            <person name="Hosono S."/>
            <person name="Hullo M.-F."/>
            <person name="Itaya M."/>
            <person name="Jones L.-M."/>
            <person name="Joris B."/>
            <person name="Karamata D."/>
            <person name="Kasahara Y."/>
            <person name="Klaerr-Blanchard M."/>
            <person name="Klein C."/>
            <person name="Kobayashi Y."/>
            <person name="Koetter P."/>
            <person name="Koningstein G."/>
            <person name="Krogh S."/>
            <person name="Kumano M."/>
            <person name="Kurita K."/>
            <person name="Lapidus A."/>
            <person name="Lardinois S."/>
            <person name="Lauber J."/>
            <person name="Lazarevic V."/>
            <person name="Lee S.-M."/>
            <person name="Levine A."/>
            <person name="Liu H."/>
            <person name="Masuda S."/>
            <person name="Mauel C."/>
            <person name="Medigue C."/>
            <person name="Medina N."/>
            <person name="Mellado R.P."/>
            <person name="Mizuno M."/>
            <person name="Moestl D."/>
            <person name="Nakai S."/>
            <person name="Noback M."/>
            <person name="Noone D."/>
            <person name="O'Reilly M."/>
            <person name="Ogawa K."/>
            <person name="Ogiwara A."/>
            <person name="Oudega B."/>
            <person name="Park S.-H."/>
            <person name="Parro V."/>
            <person name="Pohl T.M."/>
            <person name="Portetelle D."/>
            <person name="Porwollik S."/>
            <person name="Prescott A.M."/>
            <person name="Presecan E."/>
            <person name="Pujic P."/>
            <person name="Purnelle B."/>
            <person name="Rapoport G."/>
            <person name="Rey M."/>
            <person name="Reynolds S."/>
            <person name="Rieger M."/>
            <person name="Rivolta C."/>
            <person name="Rocha E."/>
            <person name="Roche B."/>
            <person name="Rose M."/>
            <person name="Sadaie Y."/>
            <person name="Sato T."/>
            <person name="Scanlan E."/>
            <person name="Schleich S."/>
            <person name="Schroeter R."/>
            <person name="Scoffone F."/>
            <person name="Sekiguchi J."/>
            <person name="Sekowska A."/>
            <person name="Seror S.J."/>
            <person name="Serror P."/>
            <person name="Shin B.-S."/>
            <person name="Soldo B."/>
            <person name="Sorokin A."/>
            <person name="Tacconi E."/>
            <person name="Takagi T."/>
            <person name="Takahashi H."/>
            <person name="Takemaru K."/>
            <person name="Takeuchi M."/>
            <person name="Tamakoshi A."/>
            <person name="Tanaka T."/>
            <person name="Terpstra P."/>
            <person name="Tognoni A."/>
            <person name="Tosato V."/>
            <person name="Uchiyama S."/>
            <person name="Vandenbol M."/>
            <person name="Vannier F."/>
            <person name="Vassarotti A."/>
            <person name="Viari A."/>
            <person name="Wambutt R."/>
            <person name="Wedler E."/>
            <person name="Wedler H."/>
            <person name="Weitzenegger T."/>
            <person name="Winters P."/>
            <person name="Wipat A."/>
            <person name="Yamamoto H."/>
            <person name="Yamane K."/>
            <person name="Yasumoto K."/>
            <person name="Yata K."/>
            <person name="Yoshida K."/>
            <person name="Yoshikawa H.-F."/>
            <person name="Zumstein E."/>
            <person name="Yoshikawa H."/>
            <person name="Danchin A."/>
        </authorList>
    </citation>
    <scope>NUCLEOTIDE SEQUENCE [LARGE SCALE GENOMIC DNA]</scope>
    <source>
        <strain>168</strain>
    </source>
</reference>
<reference key="3">
    <citation type="journal article" date="2009" name="Microbiology">
        <title>From a consortium sequence to a unified sequence: the Bacillus subtilis 168 reference genome a decade later.</title>
        <authorList>
            <person name="Barbe V."/>
            <person name="Cruveiller S."/>
            <person name="Kunst F."/>
            <person name="Lenoble P."/>
            <person name="Meurice G."/>
            <person name="Sekowska A."/>
            <person name="Vallenet D."/>
            <person name="Wang T."/>
            <person name="Moszer I."/>
            <person name="Medigue C."/>
            <person name="Danchin A."/>
        </authorList>
    </citation>
    <scope>SEQUENCE REVISION TO 92; 146 AND 246</scope>
</reference>
<reference key="4">
    <citation type="journal article" date="1996" name="Microbiology">
        <title>The 25 degrees-36 degrees region of the Bacillus subtilis chromosome: determination of the sequence of a 146 kb segment and identification of 113 genes.</title>
        <authorList>
            <person name="Yamane K."/>
            <person name="Kumano M."/>
            <person name="Kurita K."/>
        </authorList>
    </citation>
    <scope>NUCLEOTIDE SEQUENCE [GENOMIC DNA] OF 84-404</scope>
    <source>
        <strain>168</strain>
    </source>
</reference>
<evidence type="ECO:0000255" key="1"/>
<evidence type="ECO:0000305" key="2"/>
<proteinExistence type="inferred from homology"/>
<comment type="subcellular location">
    <subcellularLocation>
        <location evidence="2">Cell membrane</location>
        <topology evidence="2">Multi-pass membrane protein</topology>
    </subcellularLocation>
</comment>
<comment type="similarity">
    <text evidence="2">Belongs to the NRAMP family.</text>
</comment>
<comment type="sequence caution" evidence="2">
    <conflict type="frameshift">
        <sequence resource="EMBL-CDS" id="BAA07358"/>
    </conflict>
</comment>
<comment type="sequence caution" evidence="2">
    <conflict type="erroneous initiation">
        <sequence resource="EMBL-CDS" id="BAA07359"/>
    </conflict>
</comment>
<dbReference type="EMBL" id="D38161">
    <property type="protein sequence ID" value="BAA07358.1"/>
    <property type="status" value="ALT_FRAME"/>
    <property type="molecule type" value="Genomic_DNA"/>
</dbReference>
<dbReference type="EMBL" id="D38161">
    <property type="protein sequence ID" value="BAA07359.1"/>
    <property type="status" value="ALT_INIT"/>
    <property type="molecule type" value="Genomic_DNA"/>
</dbReference>
<dbReference type="EMBL" id="AL009126">
    <property type="protein sequence ID" value="CAB12214.3"/>
    <property type="molecule type" value="Genomic_DNA"/>
</dbReference>
<dbReference type="EMBL" id="D50453">
    <property type="protein sequence ID" value="BAA09037.1"/>
    <property type="molecule type" value="Genomic_DNA"/>
</dbReference>
<dbReference type="PIR" id="E69765">
    <property type="entry name" value="E69765"/>
</dbReference>
<dbReference type="RefSeq" id="WP_003234422.1">
    <property type="nucleotide sequence ID" value="NZ_OZ025638.1"/>
</dbReference>
<dbReference type="SMR" id="P42964"/>
<dbReference type="FunCoup" id="P42964">
    <property type="interactions" value="10"/>
</dbReference>
<dbReference type="STRING" id="224308.BSU04060"/>
<dbReference type="TCDB" id="2.A.55.3.2">
    <property type="family name" value="the metal ion (mn(2+)-iron) transporter (nramp) family"/>
</dbReference>
<dbReference type="PaxDb" id="224308-BSU04060"/>
<dbReference type="EnsemblBacteria" id="CAB12214">
    <property type="protein sequence ID" value="CAB12214"/>
    <property type="gene ID" value="BSU_04060"/>
</dbReference>
<dbReference type="GeneID" id="938257"/>
<dbReference type="KEGG" id="bsu:BSU04060"/>
<dbReference type="PATRIC" id="fig|224308.179.peg.432"/>
<dbReference type="eggNOG" id="COG1914">
    <property type="taxonomic scope" value="Bacteria"/>
</dbReference>
<dbReference type="InParanoid" id="P42964"/>
<dbReference type="OrthoDB" id="141480at2"/>
<dbReference type="PhylomeDB" id="P42964"/>
<dbReference type="BioCyc" id="BSUB:BSU04060-MONOMER"/>
<dbReference type="Proteomes" id="UP000001570">
    <property type="component" value="Chromosome"/>
</dbReference>
<dbReference type="GO" id="GO:0005886">
    <property type="term" value="C:plasma membrane"/>
    <property type="evidence" value="ECO:0000318"/>
    <property type="project" value="GO_Central"/>
</dbReference>
<dbReference type="GO" id="GO:0015086">
    <property type="term" value="F:cadmium ion transmembrane transporter activity"/>
    <property type="evidence" value="ECO:0000318"/>
    <property type="project" value="GO_Central"/>
</dbReference>
<dbReference type="GO" id="GO:0005384">
    <property type="term" value="F:manganese ion transmembrane transporter activity"/>
    <property type="evidence" value="ECO:0000318"/>
    <property type="project" value="GO_Central"/>
</dbReference>
<dbReference type="GO" id="GO:0034755">
    <property type="term" value="P:iron ion transmembrane transport"/>
    <property type="evidence" value="ECO:0000318"/>
    <property type="project" value="GO_Central"/>
</dbReference>
<dbReference type="GO" id="GO:0006828">
    <property type="term" value="P:manganese ion transport"/>
    <property type="evidence" value="ECO:0000318"/>
    <property type="project" value="GO_Central"/>
</dbReference>
<dbReference type="InterPro" id="IPR001046">
    <property type="entry name" value="NRAMP_fam"/>
</dbReference>
<dbReference type="PANTHER" id="PTHR11706">
    <property type="entry name" value="SOLUTE CARRIER PROTEIN FAMILY 11 MEMBER"/>
    <property type="match status" value="1"/>
</dbReference>
<dbReference type="PANTHER" id="PTHR11706:SF2">
    <property type="entry name" value="TRANSPORTER PROTEIN"/>
    <property type="match status" value="1"/>
</dbReference>
<dbReference type="Pfam" id="PF01566">
    <property type="entry name" value="Nramp"/>
    <property type="match status" value="1"/>
</dbReference>
<feature type="chain" id="PRO_0000099775" description="Uncharacterized membrane protein YcsG">
    <location>
        <begin position="1"/>
        <end position="404"/>
    </location>
</feature>
<feature type="transmembrane region" description="Helical" evidence="1">
    <location>
        <begin position="15"/>
        <end position="35"/>
    </location>
</feature>
<feature type="transmembrane region" description="Helical" evidence="1">
    <location>
        <begin position="43"/>
        <end position="63"/>
    </location>
</feature>
<feature type="transmembrane region" description="Helical" evidence="1">
    <location>
        <begin position="84"/>
        <end position="104"/>
    </location>
</feature>
<feature type="transmembrane region" description="Helical" evidence="1">
    <location>
        <begin position="121"/>
        <end position="141"/>
    </location>
</feature>
<feature type="transmembrane region" description="Helical" evidence="1">
    <location>
        <begin position="154"/>
        <end position="174"/>
    </location>
</feature>
<feature type="transmembrane region" description="Helical" evidence="1">
    <location>
        <begin position="187"/>
        <end position="207"/>
    </location>
</feature>
<feature type="transmembrane region" description="Helical" evidence="1">
    <location>
        <begin position="231"/>
        <end position="251"/>
    </location>
</feature>
<feature type="transmembrane region" description="Helical" evidence="1">
    <location>
        <begin position="279"/>
        <end position="299"/>
    </location>
</feature>
<feature type="transmembrane region" description="Helical" evidence="1">
    <location>
        <begin position="316"/>
        <end position="336"/>
    </location>
</feature>
<feature type="transmembrane region" description="Helical" evidence="1">
    <location>
        <begin position="338"/>
        <end position="358"/>
    </location>
</feature>
<feature type="transmembrane region" description="Helical" evidence="1">
    <location>
        <begin position="373"/>
        <end position="393"/>
    </location>
</feature>
<feature type="sequence conflict" description="In Ref. 1; BAA07358 and 4; BAA09037." evidence="2" ref="1 4">
    <original>F</original>
    <variation>S</variation>
    <location>
        <position position="92"/>
    </location>
</feature>
<feature type="sequence conflict" description="In Ref. 1; BAA07358/BAA07359 and 4; BAA09037." evidence="2" ref="1 4">
    <original>K</original>
    <variation>I</variation>
    <location>
        <position position="146"/>
    </location>
</feature>
<feature type="sequence conflict" description="In Ref. 1; BAA07359 and 4; BAA09037." evidence="2" ref="1 4">
    <original>L</original>
    <variation>F</variation>
    <location>
        <position position="246"/>
    </location>
</feature>